<gene>
    <name evidence="1" type="primary">pdxH</name>
    <name type="ordered locus">AHA_1408</name>
</gene>
<organism>
    <name type="scientific">Aeromonas hydrophila subsp. hydrophila (strain ATCC 7966 / DSM 30187 / BCRC 13018 / CCUG 14551 / JCM 1027 / KCTC 2358 / NCIMB 9240 / NCTC 8049)</name>
    <dbReference type="NCBI Taxonomy" id="380703"/>
    <lineage>
        <taxon>Bacteria</taxon>
        <taxon>Pseudomonadati</taxon>
        <taxon>Pseudomonadota</taxon>
        <taxon>Gammaproteobacteria</taxon>
        <taxon>Aeromonadales</taxon>
        <taxon>Aeromonadaceae</taxon>
        <taxon>Aeromonas</taxon>
    </lineage>
</organism>
<reference key="1">
    <citation type="journal article" date="2006" name="J. Bacteriol.">
        <title>Genome sequence of Aeromonas hydrophila ATCC 7966T: jack of all trades.</title>
        <authorList>
            <person name="Seshadri R."/>
            <person name="Joseph S.W."/>
            <person name="Chopra A.K."/>
            <person name="Sha J."/>
            <person name="Shaw J."/>
            <person name="Graf J."/>
            <person name="Haft D.H."/>
            <person name="Wu M."/>
            <person name="Ren Q."/>
            <person name="Rosovitz M.J."/>
            <person name="Madupu R."/>
            <person name="Tallon L."/>
            <person name="Kim M."/>
            <person name="Jin S."/>
            <person name="Vuong H."/>
            <person name="Stine O.C."/>
            <person name="Ali A."/>
            <person name="Horneman A.J."/>
            <person name="Heidelberg J.F."/>
        </authorList>
    </citation>
    <scope>NUCLEOTIDE SEQUENCE [LARGE SCALE GENOMIC DNA]</scope>
    <source>
        <strain>ATCC 7966 / DSM 30187 / BCRC 13018 / CCUG 14551 / JCM 1027 / KCTC 2358 / NCIMB 9240 / NCTC 8049</strain>
    </source>
</reference>
<protein>
    <recommendedName>
        <fullName evidence="1">Pyridoxine/pyridoxamine 5'-phosphate oxidase</fullName>
        <ecNumber evidence="1">1.4.3.5</ecNumber>
    </recommendedName>
    <alternativeName>
        <fullName evidence="1">PNP/PMP oxidase</fullName>
        <shortName evidence="1">PNPOx</shortName>
    </alternativeName>
    <alternativeName>
        <fullName evidence="1">Pyridoxal 5'-phosphate synthase</fullName>
    </alternativeName>
</protein>
<keyword id="KW-0285">Flavoprotein</keyword>
<keyword id="KW-0288">FMN</keyword>
<keyword id="KW-0560">Oxidoreductase</keyword>
<keyword id="KW-0664">Pyridoxine biosynthesis</keyword>
<keyword id="KW-1185">Reference proteome</keyword>
<name>PDXH_AERHH</name>
<sequence length="211" mass="24385">MDVADLRREYTRGGLHRADLPAEPLALFEKWLAQACEAKLTDPTAMVVGTVDADGQPWQRTVLLKHYDAEGMVFYTNMGSRKAHQLEGNPRISLLFPWHTLDRQVHVTGRVEKMSTFEVMKYFHSRPKDSQIAAWVSQQSTRISARGVLEAKFLELKQKFANGEVPLPSFWGGFRVRIDTVEFWQGGEHRLHDRFYYTREGEGWHIERLAP</sequence>
<feature type="chain" id="PRO_0000292285" description="Pyridoxine/pyridoxamine 5'-phosphate oxidase">
    <location>
        <begin position="1"/>
        <end position="211"/>
    </location>
</feature>
<feature type="binding site" evidence="1">
    <location>
        <begin position="7"/>
        <end position="10"/>
    </location>
    <ligand>
        <name>substrate</name>
    </ligand>
</feature>
<feature type="binding site" evidence="1">
    <location>
        <begin position="60"/>
        <end position="65"/>
    </location>
    <ligand>
        <name>FMN</name>
        <dbReference type="ChEBI" id="CHEBI:58210"/>
    </ligand>
</feature>
<feature type="binding site" evidence="1">
    <location>
        <position position="65"/>
    </location>
    <ligand>
        <name>substrate</name>
    </ligand>
</feature>
<feature type="binding site" evidence="1">
    <location>
        <begin position="75"/>
        <end position="76"/>
    </location>
    <ligand>
        <name>FMN</name>
        <dbReference type="ChEBI" id="CHEBI:58210"/>
    </ligand>
</feature>
<feature type="binding site" evidence="1">
    <location>
        <position position="81"/>
    </location>
    <ligand>
        <name>FMN</name>
        <dbReference type="ChEBI" id="CHEBI:58210"/>
    </ligand>
</feature>
<feature type="binding site" evidence="1">
    <location>
        <position position="82"/>
    </location>
    <ligand>
        <name>FMN</name>
        <dbReference type="ChEBI" id="CHEBI:58210"/>
    </ligand>
</feature>
<feature type="binding site" evidence="1">
    <location>
        <position position="104"/>
    </location>
    <ligand>
        <name>FMN</name>
        <dbReference type="ChEBI" id="CHEBI:58210"/>
    </ligand>
</feature>
<feature type="binding site" evidence="1">
    <location>
        <position position="122"/>
    </location>
    <ligand>
        <name>substrate</name>
    </ligand>
</feature>
<feature type="binding site" evidence="1">
    <location>
        <position position="126"/>
    </location>
    <ligand>
        <name>substrate</name>
    </ligand>
</feature>
<feature type="binding site" evidence="1">
    <location>
        <position position="130"/>
    </location>
    <ligand>
        <name>substrate</name>
    </ligand>
</feature>
<feature type="binding site" evidence="1">
    <location>
        <begin position="139"/>
        <end position="140"/>
    </location>
    <ligand>
        <name>FMN</name>
        <dbReference type="ChEBI" id="CHEBI:58210"/>
    </ligand>
</feature>
<feature type="binding site" evidence="1">
    <location>
        <position position="184"/>
    </location>
    <ligand>
        <name>FMN</name>
        <dbReference type="ChEBI" id="CHEBI:58210"/>
    </ligand>
</feature>
<feature type="binding site" evidence="1">
    <location>
        <begin position="190"/>
        <end position="192"/>
    </location>
    <ligand>
        <name>substrate</name>
    </ligand>
</feature>
<feature type="binding site" evidence="1">
    <location>
        <position position="194"/>
    </location>
    <ligand>
        <name>FMN</name>
        <dbReference type="ChEBI" id="CHEBI:58210"/>
    </ligand>
</feature>
<comment type="function">
    <text evidence="1">Catalyzes the oxidation of either pyridoxine 5'-phosphate (PNP) or pyridoxamine 5'-phosphate (PMP) into pyridoxal 5'-phosphate (PLP).</text>
</comment>
<comment type="catalytic activity">
    <reaction evidence="1">
        <text>pyridoxamine 5'-phosphate + O2 + H2O = pyridoxal 5'-phosphate + H2O2 + NH4(+)</text>
        <dbReference type="Rhea" id="RHEA:15817"/>
        <dbReference type="ChEBI" id="CHEBI:15377"/>
        <dbReference type="ChEBI" id="CHEBI:15379"/>
        <dbReference type="ChEBI" id="CHEBI:16240"/>
        <dbReference type="ChEBI" id="CHEBI:28938"/>
        <dbReference type="ChEBI" id="CHEBI:58451"/>
        <dbReference type="ChEBI" id="CHEBI:597326"/>
        <dbReference type="EC" id="1.4.3.5"/>
    </reaction>
</comment>
<comment type="catalytic activity">
    <reaction evidence="1">
        <text>pyridoxine 5'-phosphate + O2 = pyridoxal 5'-phosphate + H2O2</text>
        <dbReference type="Rhea" id="RHEA:15149"/>
        <dbReference type="ChEBI" id="CHEBI:15379"/>
        <dbReference type="ChEBI" id="CHEBI:16240"/>
        <dbReference type="ChEBI" id="CHEBI:58589"/>
        <dbReference type="ChEBI" id="CHEBI:597326"/>
        <dbReference type="EC" id="1.4.3.5"/>
    </reaction>
</comment>
<comment type="cofactor">
    <cofactor evidence="1">
        <name>FMN</name>
        <dbReference type="ChEBI" id="CHEBI:58210"/>
    </cofactor>
    <text evidence="1">Binds 1 FMN per subunit.</text>
</comment>
<comment type="pathway">
    <text evidence="1">Cofactor metabolism; pyridoxal 5'-phosphate salvage; pyridoxal 5'-phosphate from pyridoxamine 5'-phosphate: step 1/1.</text>
</comment>
<comment type="pathway">
    <text evidence="1">Cofactor metabolism; pyridoxal 5'-phosphate salvage; pyridoxal 5'-phosphate from pyridoxine 5'-phosphate: step 1/1.</text>
</comment>
<comment type="subunit">
    <text evidence="1">Homodimer.</text>
</comment>
<comment type="similarity">
    <text evidence="1">Belongs to the pyridoxamine 5'-phosphate oxidase family.</text>
</comment>
<comment type="sequence caution" evidence="2">
    <conflict type="erroneous initiation">
        <sequence resource="EMBL-CDS" id="ABK38341"/>
    </conflict>
</comment>
<dbReference type="EC" id="1.4.3.5" evidence="1"/>
<dbReference type="EMBL" id="CP000462">
    <property type="protein sequence ID" value="ABK38341.1"/>
    <property type="status" value="ALT_INIT"/>
    <property type="molecule type" value="Genomic_DNA"/>
</dbReference>
<dbReference type="RefSeq" id="YP_855947.1">
    <property type="nucleotide sequence ID" value="NC_008570.1"/>
</dbReference>
<dbReference type="SMR" id="A0KI46"/>
<dbReference type="STRING" id="380703.AHA_1408"/>
<dbReference type="EnsemblBacteria" id="ABK38341">
    <property type="protein sequence ID" value="ABK38341"/>
    <property type="gene ID" value="AHA_1408"/>
</dbReference>
<dbReference type="KEGG" id="aha:AHA_1408"/>
<dbReference type="PATRIC" id="fig|380703.7.peg.1416"/>
<dbReference type="eggNOG" id="COG0259">
    <property type="taxonomic scope" value="Bacteria"/>
</dbReference>
<dbReference type="HOGENOM" id="CLU_032263_2_2_6"/>
<dbReference type="OrthoDB" id="9780392at2"/>
<dbReference type="UniPathway" id="UPA01068">
    <property type="reaction ID" value="UER00304"/>
</dbReference>
<dbReference type="UniPathway" id="UPA01068">
    <property type="reaction ID" value="UER00305"/>
</dbReference>
<dbReference type="Proteomes" id="UP000000756">
    <property type="component" value="Chromosome"/>
</dbReference>
<dbReference type="GO" id="GO:0010181">
    <property type="term" value="F:FMN binding"/>
    <property type="evidence" value="ECO:0007669"/>
    <property type="project" value="UniProtKB-UniRule"/>
</dbReference>
<dbReference type="GO" id="GO:0004733">
    <property type="term" value="F:pyridoxamine phosphate oxidase activity"/>
    <property type="evidence" value="ECO:0007669"/>
    <property type="project" value="UniProtKB-UniRule"/>
</dbReference>
<dbReference type="GO" id="GO:0008615">
    <property type="term" value="P:pyridoxine biosynthetic process"/>
    <property type="evidence" value="ECO:0007669"/>
    <property type="project" value="UniProtKB-KW"/>
</dbReference>
<dbReference type="FunFam" id="2.30.110.10:FF:000001">
    <property type="entry name" value="Pyridoxine/pyridoxamine 5'-phosphate oxidase"/>
    <property type="match status" value="1"/>
</dbReference>
<dbReference type="Gene3D" id="2.30.110.10">
    <property type="entry name" value="Electron Transport, Fmn-binding Protein, Chain A"/>
    <property type="match status" value="1"/>
</dbReference>
<dbReference type="HAMAP" id="MF_01629">
    <property type="entry name" value="PdxH"/>
    <property type="match status" value="1"/>
</dbReference>
<dbReference type="InterPro" id="IPR000659">
    <property type="entry name" value="Pyridox_Oxase"/>
</dbReference>
<dbReference type="InterPro" id="IPR019740">
    <property type="entry name" value="Pyridox_Oxase_CS"/>
</dbReference>
<dbReference type="InterPro" id="IPR011576">
    <property type="entry name" value="Pyridox_Oxase_N"/>
</dbReference>
<dbReference type="InterPro" id="IPR019576">
    <property type="entry name" value="Pyridoxamine_oxidase_dimer_C"/>
</dbReference>
<dbReference type="InterPro" id="IPR012349">
    <property type="entry name" value="Split_barrel_FMN-bd"/>
</dbReference>
<dbReference type="NCBIfam" id="TIGR00558">
    <property type="entry name" value="pdxH"/>
    <property type="match status" value="1"/>
</dbReference>
<dbReference type="NCBIfam" id="NF004231">
    <property type="entry name" value="PRK05679.1"/>
    <property type="match status" value="1"/>
</dbReference>
<dbReference type="PANTHER" id="PTHR10851:SF0">
    <property type="entry name" value="PYRIDOXINE-5'-PHOSPHATE OXIDASE"/>
    <property type="match status" value="1"/>
</dbReference>
<dbReference type="PANTHER" id="PTHR10851">
    <property type="entry name" value="PYRIDOXINE-5-PHOSPHATE OXIDASE"/>
    <property type="match status" value="1"/>
</dbReference>
<dbReference type="Pfam" id="PF10590">
    <property type="entry name" value="PNP_phzG_C"/>
    <property type="match status" value="1"/>
</dbReference>
<dbReference type="Pfam" id="PF01243">
    <property type="entry name" value="PNPOx_N"/>
    <property type="match status" value="1"/>
</dbReference>
<dbReference type="PIRSF" id="PIRSF000190">
    <property type="entry name" value="Pyd_amn-ph_oxd"/>
    <property type="match status" value="1"/>
</dbReference>
<dbReference type="SUPFAM" id="SSF50475">
    <property type="entry name" value="FMN-binding split barrel"/>
    <property type="match status" value="1"/>
</dbReference>
<dbReference type="PROSITE" id="PS01064">
    <property type="entry name" value="PYRIDOX_OXIDASE"/>
    <property type="match status" value="1"/>
</dbReference>
<accession>A0KI46</accession>
<evidence type="ECO:0000255" key="1">
    <source>
        <dbReference type="HAMAP-Rule" id="MF_01629"/>
    </source>
</evidence>
<evidence type="ECO:0000305" key="2"/>
<proteinExistence type="inferred from homology"/>